<dbReference type="EMBL" id="U04932">
    <property type="protein sequence ID" value="AAA73412.1"/>
    <property type="molecule type" value="Unassigned_DNA"/>
</dbReference>
<dbReference type="SMR" id="Q56253"/>
<dbReference type="GO" id="GO:0003677">
    <property type="term" value="F:DNA binding"/>
    <property type="evidence" value="ECO:0007669"/>
    <property type="project" value="UniProtKB-KW"/>
</dbReference>
<dbReference type="GO" id="GO:0003700">
    <property type="term" value="F:DNA-binding transcription factor activity"/>
    <property type="evidence" value="ECO:0007669"/>
    <property type="project" value="UniProtKB-UniRule"/>
</dbReference>
<dbReference type="GO" id="GO:0006352">
    <property type="term" value="P:DNA-templated transcription initiation"/>
    <property type="evidence" value="ECO:0007669"/>
    <property type="project" value="InterPro"/>
</dbReference>
<dbReference type="CDD" id="cd04518">
    <property type="entry name" value="TBP_archaea"/>
    <property type="match status" value="1"/>
</dbReference>
<dbReference type="FunFam" id="3.30.310.10:FF:000007">
    <property type="entry name" value="TATA-box-binding protein"/>
    <property type="match status" value="1"/>
</dbReference>
<dbReference type="FunFam" id="3.30.310.10:FF:000010">
    <property type="entry name" value="TATA-box-binding protein"/>
    <property type="match status" value="1"/>
</dbReference>
<dbReference type="Gene3D" id="3.30.310.10">
    <property type="entry name" value="TATA-Binding Protein"/>
    <property type="match status" value="2"/>
</dbReference>
<dbReference type="HAMAP" id="MF_00408">
    <property type="entry name" value="TATA_bind_prot_arch"/>
    <property type="match status" value="1"/>
</dbReference>
<dbReference type="InterPro" id="IPR000814">
    <property type="entry name" value="TBP"/>
</dbReference>
<dbReference type="InterPro" id="IPR033711">
    <property type="entry name" value="TBP_archaea"/>
</dbReference>
<dbReference type="InterPro" id="IPR030491">
    <property type="entry name" value="TBP_CS"/>
</dbReference>
<dbReference type="InterPro" id="IPR012295">
    <property type="entry name" value="TBP_dom_sf"/>
</dbReference>
<dbReference type="NCBIfam" id="NF001593">
    <property type="entry name" value="PRK00394.1-2"/>
    <property type="match status" value="1"/>
</dbReference>
<dbReference type="NCBIfam" id="NF001594">
    <property type="entry name" value="PRK00394.1-3"/>
    <property type="match status" value="1"/>
</dbReference>
<dbReference type="PANTHER" id="PTHR10126">
    <property type="entry name" value="TATA-BOX BINDING PROTEIN"/>
    <property type="match status" value="1"/>
</dbReference>
<dbReference type="Pfam" id="PF00352">
    <property type="entry name" value="TBP"/>
    <property type="match status" value="2"/>
</dbReference>
<dbReference type="PRINTS" id="PR00686">
    <property type="entry name" value="TIFACTORIID"/>
</dbReference>
<dbReference type="SUPFAM" id="SSF55945">
    <property type="entry name" value="TATA-box binding protein-like"/>
    <property type="match status" value="2"/>
</dbReference>
<dbReference type="PROSITE" id="PS00351">
    <property type="entry name" value="TFIID"/>
    <property type="match status" value="2"/>
</dbReference>
<protein>
    <recommendedName>
        <fullName>TATA-box-binding protein</fullName>
    </recommendedName>
    <alternativeName>
        <fullName>Box A-binding protein</fullName>
        <shortName>BAP</shortName>
    </alternativeName>
    <alternativeName>
        <fullName>TATA sequence-binding protein</fullName>
        <shortName>TBP</shortName>
    </alternativeName>
    <alternativeName>
        <fullName>TATA-box factor</fullName>
    </alternativeName>
</protein>
<evidence type="ECO:0000250" key="1"/>
<evidence type="ECO:0000305" key="2"/>
<feature type="chain" id="PRO_0000154029" description="TATA-box-binding protein">
    <location>
        <begin position="1"/>
        <end position="189"/>
    </location>
</feature>
<feature type="repeat" description="1">
    <location>
        <begin position="8"/>
        <end position="84"/>
    </location>
</feature>
<feature type="repeat" description="2">
    <location>
        <begin position="99"/>
        <end position="175"/>
    </location>
</feature>
<comment type="function">
    <text evidence="1">General factor that plays a role in the activation of archaeal genes transcribed by RNA polymerase. Binds specifically to the TATA box promoter element which lies close to the position of transcription initiation (By similarity).</text>
</comment>
<comment type="similarity">
    <text evidence="2">Belongs to the TBP family.</text>
</comment>
<reference key="1">
    <citation type="journal article" date="1994" name="Proc. Natl. Acad. Sci. U.S.A.">
        <title>Transcription factor IID in the Archaea: sequences in the Thermococcus celer genome would encode a product closely related to the TATA-binding protein of eukaryotes.</title>
        <authorList>
            <person name="Marsh T.L."/>
            <person name="Reich C.I."/>
            <person name="Whitelock R.B."/>
            <person name="Olsen G.J."/>
        </authorList>
    </citation>
    <scope>NUCLEOTIDE SEQUENCE [GENOMIC DNA]</scope>
    <source>
        <strain>ATCC 35543 / DSM 2476 / JCM 8558 / Vu 13</strain>
    </source>
</reference>
<accession>Q56253</accession>
<name>TBP_THECE</name>
<sequence>MSNVKLRIENIVASVDLFTQLNLERVIEMCPHSKYNPEEFPGIICRFDEPKVALLIFSSGKLVVTGAKSVEDIERAVNKLIQMLKKIGAKFSRAPQIDIQNMVFSGDIGMEFNLDAVALSLPNCEYEPEQFPGVIYRVKEPRAVILLFSSGKIVCSGAKSEHDAWEAVRKLLRELEKYDLIGEGEEEEW</sequence>
<keyword id="KW-0238">DNA-binding</keyword>
<keyword id="KW-0677">Repeat</keyword>
<keyword id="KW-0804">Transcription</keyword>
<keyword id="KW-0805">Transcription regulation</keyword>
<organism>
    <name type="scientific">Thermococcus celer</name>
    <dbReference type="NCBI Taxonomy" id="2264"/>
    <lineage>
        <taxon>Archaea</taxon>
        <taxon>Methanobacteriati</taxon>
        <taxon>Methanobacteriota</taxon>
        <taxon>Thermococci</taxon>
        <taxon>Thermococcales</taxon>
        <taxon>Thermococcaceae</taxon>
        <taxon>Thermococcus</taxon>
    </lineage>
</organism>
<gene>
    <name type="primary">tbp</name>
</gene>
<proteinExistence type="inferred from homology"/>